<proteinExistence type="inferred from homology"/>
<sequence length="439" mass="49202">MKSIVISSNSSGGGKTTIAVGIMKALMKKGFDVQGYKVGPDYIDPAFHSQITGKPSRNLDIYLTGEEGVKASYSRGKGNLGVVEGVMGLYDGKGIDSKYSTAHVAKTLGLPVVLVLSPKAQSATLCAEINGLINFDKVEIGGIILNNISESYYNLLKAAIEYNCNAKVLGYIPKDERLKIGSRHLGLIQSSEIEDLEEKIDICSEHILKNIDLEELFKIFKKTPEYEDNFHLENKNLKIAVAYDKAFSFYYRDNIELLEELGEITYFSPLMDKELPKDIDFLYIGGGYPEVFIEELSKNESMLKSIKEELDKGLKCYAECGGLMYLTEAIENEDLKGNAVGYFEGFSKMTKRLQNFGYAQLEVYKENEILPKGLKINCHEFHKSTVELDEDKIFKINKTMYNGDTKHWNCGYIKGNTIAAYAHVNFLGNIEFLKALLEK</sequence>
<dbReference type="EC" id="6.3.5.11" evidence="1"/>
<dbReference type="EMBL" id="AE015927">
    <property type="protein sequence ID" value="AAO35333.1"/>
    <property type="molecule type" value="Genomic_DNA"/>
</dbReference>
<dbReference type="RefSeq" id="WP_011098999.1">
    <property type="nucleotide sequence ID" value="NC_004557.1"/>
</dbReference>
<dbReference type="SMR" id="Q897K3"/>
<dbReference type="STRING" id="212717.CTC_00731"/>
<dbReference type="GeneID" id="24253449"/>
<dbReference type="KEGG" id="ctc:CTC_00731"/>
<dbReference type="HOGENOM" id="CLU_022752_2_0_9"/>
<dbReference type="OrthoDB" id="9764035at2"/>
<dbReference type="UniPathway" id="UPA00148">
    <property type="reaction ID" value="UER00231"/>
</dbReference>
<dbReference type="Proteomes" id="UP000001412">
    <property type="component" value="Chromosome"/>
</dbReference>
<dbReference type="GO" id="GO:0005524">
    <property type="term" value="F:ATP binding"/>
    <property type="evidence" value="ECO:0007669"/>
    <property type="project" value="UniProtKB-UniRule"/>
</dbReference>
<dbReference type="GO" id="GO:0042242">
    <property type="term" value="F:cobyrinic acid a,c-diamide synthase activity"/>
    <property type="evidence" value="ECO:0007669"/>
    <property type="project" value="UniProtKB-UniRule"/>
</dbReference>
<dbReference type="GO" id="GO:0009236">
    <property type="term" value="P:cobalamin biosynthetic process"/>
    <property type="evidence" value="ECO:0007669"/>
    <property type="project" value="UniProtKB-UniRule"/>
</dbReference>
<dbReference type="CDD" id="cd05388">
    <property type="entry name" value="CobB_N"/>
    <property type="match status" value="1"/>
</dbReference>
<dbReference type="CDD" id="cd03130">
    <property type="entry name" value="GATase1_CobB"/>
    <property type="match status" value="1"/>
</dbReference>
<dbReference type="Gene3D" id="3.40.50.880">
    <property type="match status" value="1"/>
</dbReference>
<dbReference type="Gene3D" id="3.40.50.300">
    <property type="entry name" value="P-loop containing nucleotide triphosphate hydrolases"/>
    <property type="match status" value="1"/>
</dbReference>
<dbReference type="HAMAP" id="MF_00027">
    <property type="entry name" value="CobB_CbiA"/>
    <property type="match status" value="1"/>
</dbReference>
<dbReference type="InterPro" id="IPR004484">
    <property type="entry name" value="CbiA/CobB_synth"/>
</dbReference>
<dbReference type="InterPro" id="IPR029062">
    <property type="entry name" value="Class_I_gatase-like"/>
</dbReference>
<dbReference type="InterPro" id="IPR002586">
    <property type="entry name" value="CobQ/CobB/MinD/ParA_Nub-bd_dom"/>
</dbReference>
<dbReference type="InterPro" id="IPR011698">
    <property type="entry name" value="GATase_3"/>
</dbReference>
<dbReference type="InterPro" id="IPR027417">
    <property type="entry name" value="P-loop_NTPase"/>
</dbReference>
<dbReference type="NCBIfam" id="TIGR00379">
    <property type="entry name" value="cobB"/>
    <property type="match status" value="1"/>
</dbReference>
<dbReference type="NCBIfam" id="NF002204">
    <property type="entry name" value="PRK01077.1"/>
    <property type="match status" value="1"/>
</dbReference>
<dbReference type="PANTHER" id="PTHR43873">
    <property type="entry name" value="COBYRINATE A,C-DIAMIDE SYNTHASE"/>
    <property type="match status" value="1"/>
</dbReference>
<dbReference type="PANTHER" id="PTHR43873:SF1">
    <property type="entry name" value="COBYRINATE A,C-DIAMIDE SYNTHASE"/>
    <property type="match status" value="1"/>
</dbReference>
<dbReference type="Pfam" id="PF01656">
    <property type="entry name" value="CbiA"/>
    <property type="match status" value="1"/>
</dbReference>
<dbReference type="Pfam" id="PF07685">
    <property type="entry name" value="GATase_3"/>
    <property type="match status" value="1"/>
</dbReference>
<dbReference type="SUPFAM" id="SSF52317">
    <property type="entry name" value="Class I glutamine amidotransferase-like"/>
    <property type="match status" value="1"/>
</dbReference>
<dbReference type="SUPFAM" id="SSF52540">
    <property type="entry name" value="P-loop containing nucleoside triphosphate hydrolases"/>
    <property type="match status" value="1"/>
</dbReference>
<dbReference type="PROSITE" id="PS51274">
    <property type="entry name" value="GATASE_COBBQ"/>
    <property type="match status" value="1"/>
</dbReference>
<reference key="1">
    <citation type="journal article" date="2003" name="Proc. Natl. Acad. Sci. U.S.A.">
        <title>The genome sequence of Clostridium tetani, the causative agent of tetanus disease.</title>
        <authorList>
            <person name="Brueggemann H."/>
            <person name="Baeumer S."/>
            <person name="Fricke W.F."/>
            <person name="Wiezer A."/>
            <person name="Liesegang H."/>
            <person name="Decker I."/>
            <person name="Herzberg C."/>
            <person name="Martinez-Arias R."/>
            <person name="Merkl R."/>
            <person name="Henne A."/>
            <person name="Gottschalk G."/>
        </authorList>
    </citation>
    <scope>NUCLEOTIDE SEQUENCE [LARGE SCALE GENOMIC DNA]</scope>
    <source>
        <strain>Massachusetts / E88</strain>
    </source>
</reference>
<evidence type="ECO:0000255" key="1">
    <source>
        <dbReference type="HAMAP-Rule" id="MF_00027"/>
    </source>
</evidence>
<protein>
    <recommendedName>
        <fullName evidence="1">Cobyrinate a,c-diamide synthase</fullName>
        <ecNumber evidence="1">6.3.5.11</ecNumber>
    </recommendedName>
    <alternativeName>
        <fullName evidence="1">Cobyrinic acid a,c-diamide synthetase</fullName>
    </alternativeName>
</protein>
<comment type="function">
    <text evidence="1">Catalyzes the ATP-dependent amidation of the two carboxylate groups at positions a and c of cobyrinate, using either L-glutamine or ammonia as the nitrogen source.</text>
</comment>
<comment type="catalytic activity">
    <reaction evidence="1">
        <text>cob(II)yrinate + 2 L-glutamine + 2 ATP + 2 H2O = cob(II)yrinate a,c diamide + 2 L-glutamate + 2 ADP + 2 phosphate + 2 H(+)</text>
        <dbReference type="Rhea" id="RHEA:26289"/>
        <dbReference type="ChEBI" id="CHEBI:15377"/>
        <dbReference type="ChEBI" id="CHEBI:15378"/>
        <dbReference type="ChEBI" id="CHEBI:29985"/>
        <dbReference type="ChEBI" id="CHEBI:30616"/>
        <dbReference type="ChEBI" id="CHEBI:43474"/>
        <dbReference type="ChEBI" id="CHEBI:58359"/>
        <dbReference type="ChEBI" id="CHEBI:58537"/>
        <dbReference type="ChEBI" id="CHEBI:58894"/>
        <dbReference type="ChEBI" id="CHEBI:456216"/>
        <dbReference type="EC" id="6.3.5.11"/>
    </reaction>
</comment>
<comment type="cofactor">
    <cofactor evidence="1">
        <name>Mg(2+)</name>
        <dbReference type="ChEBI" id="CHEBI:18420"/>
    </cofactor>
</comment>
<comment type="pathway">
    <text evidence="1">Cofactor biosynthesis; adenosylcobalamin biosynthesis; cob(II)yrinate a,c-diamide from sirohydrochlorin (anaerobic route): step 10/10.</text>
</comment>
<comment type="domain">
    <text evidence="1">Comprises of two domains. The C-terminal domain contains the binding site for glutamine and catalyzes the hydrolysis of this substrate to glutamate and ammonia. The N-terminal domain is anticipated to bind ATP and cobyrinate and catalyzes the ultimate synthesis of the diamide product. The ammonia produced via the glutaminase domain is probably translocated to the adjacent domain via a molecular tunnel, where it reacts with an activated intermediate.</text>
</comment>
<comment type="miscellaneous">
    <text evidence="1">The a and c carboxylates of cobyrinate are activated for nucleophilic attack via formation of a phosphorylated intermediate by ATP. CbiA catalyzes first the amidation of the c-carboxylate, and then that of the a-carboxylate.</text>
</comment>
<comment type="similarity">
    <text evidence="1">Belongs to the CobB/CbiA family.</text>
</comment>
<accession>Q897K3</accession>
<organism>
    <name type="scientific">Clostridium tetani (strain Massachusetts / E88)</name>
    <dbReference type="NCBI Taxonomy" id="212717"/>
    <lineage>
        <taxon>Bacteria</taxon>
        <taxon>Bacillati</taxon>
        <taxon>Bacillota</taxon>
        <taxon>Clostridia</taxon>
        <taxon>Eubacteriales</taxon>
        <taxon>Clostridiaceae</taxon>
        <taxon>Clostridium</taxon>
    </lineage>
</organism>
<name>CBIA_CLOTE</name>
<gene>
    <name evidence="1" type="primary">cbiA</name>
    <name type="synonym">cobB</name>
    <name type="ordered locus">CTC_00731</name>
</gene>
<keyword id="KW-0067">ATP-binding</keyword>
<keyword id="KW-0169">Cobalamin biosynthesis</keyword>
<keyword id="KW-0315">Glutamine amidotransferase</keyword>
<keyword id="KW-0436">Ligase</keyword>
<keyword id="KW-0460">Magnesium</keyword>
<keyword id="KW-0547">Nucleotide-binding</keyword>
<keyword id="KW-1185">Reference proteome</keyword>
<feature type="chain" id="PRO_1000057224" description="Cobyrinate a,c-diamide synthase">
    <location>
        <begin position="1"/>
        <end position="439"/>
    </location>
</feature>
<feature type="domain" description="GATase cobBQ-type" evidence="1">
    <location>
        <begin position="238"/>
        <end position="431"/>
    </location>
</feature>
<feature type="active site" description="Nucleophile" evidence="1">
    <location>
        <position position="320"/>
    </location>
</feature>
<feature type="site" description="Increases nucleophilicity of active site Cys" evidence="1">
    <location>
        <position position="423"/>
    </location>
</feature>